<sequence>MGSVLSSDSGKSAPPSATPRALERRGDPELPVTSFDCAVCLEVLHQPVRTRCGHVFCRSCIATSLKNNKWTCPYCRAYLPSEGVPATDVAKRMKSEYKNCAECDTLVCLGEMRAHIRTCQKYIDKYGPLQELGETAARCVCPFCQRELDEDSLLDHCITHHRSERRPVFCPLCRLIPDENPSSFSGSLIRHLQVSHTLFYDDFIDFNIIEEALIRRVLDRSLLEYVNQSNAT</sequence>
<keyword id="KW-1064">Adaptive immunity</keyword>
<keyword id="KW-0333">Golgi apparatus</keyword>
<keyword id="KW-0391">Immunity</keyword>
<keyword id="KW-0449">Lipoprotein</keyword>
<keyword id="KW-0472">Membrane</keyword>
<keyword id="KW-0479">Metal-binding</keyword>
<keyword id="KW-0519">Myristate</keyword>
<keyword id="KW-1185">Reference proteome</keyword>
<keyword id="KW-0808">Transferase</keyword>
<keyword id="KW-0832">Ubl conjugation</keyword>
<keyword id="KW-0833">Ubl conjugation pathway</keyword>
<keyword id="KW-0862">Zinc</keyword>
<keyword id="KW-0863">Zinc-finger</keyword>
<feature type="initiator methionine" description="Removed" evidence="1">
    <location>
        <position position="1"/>
    </location>
</feature>
<feature type="chain" id="PRO_0000056091" description="E3 ubiquitin-protein ligase RNF125">
    <location>
        <begin position="2"/>
        <end position="232"/>
    </location>
</feature>
<feature type="zinc finger region" description="RING-type" evidence="2">
    <location>
        <begin position="37"/>
        <end position="76"/>
    </location>
</feature>
<feature type="zinc finger region" description="C2HC RNF-type" evidence="3">
    <location>
        <begin position="100"/>
        <end position="119"/>
    </location>
</feature>
<feature type="region of interest" description="Disordered" evidence="4">
    <location>
        <begin position="1"/>
        <end position="27"/>
    </location>
</feature>
<feature type="region of interest" description="Interaction with the C2HC RNF-type zinc finger" evidence="1">
    <location>
        <begin position="43"/>
        <end position="45"/>
    </location>
</feature>
<feature type="region of interest" description="Interaction with the RING-type zinc finger" evidence="1">
    <location>
        <begin position="109"/>
        <end position="113"/>
    </location>
</feature>
<feature type="region of interest" description="Linker region" evidence="1">
    <location>
        <begin position="120"/>
        <end position="128"/>
    </location>
</feature>
<feature type="region of interest" description="Required for interaction with ubiquitin and for autoubiquitination" evidence="1">
    <location>
        <begin position="210"/>
        <end position="224"/>
    </location>
</feature>
<feature type="compositionally biased region" description="Polar residues" evidence="4">
    <location>
        <begin position="1"/>
        <end position="10"/>
    </location>
</feature>
<feature type="binding site" evidence="1">
    <location>
        <position position="37"/>
    </location>
    <ligand>
        <name>Zn(2+)</name>
        <dbReference type="ChEBI" id="CHEBI:29105"/>
        <label>1</label>
    </ligand>
</feature>
<feature type="binding site" evidence="1">
    <location>
        <position position="40"/>
    </location>
    <ligand>
        <name>Zn(2+)</name>
        <dbReference type="ChEBI" id="CHEBI:29105"/>
        <label>1</label>
    </ligand>
</feature>
<feature type="binding site" evidence="1">
    <location>
        <position position="52"/>
    </location>
    <ligand>
        <name>Zn(2+)</name>
        <dbReference type="ChEBI" id="CHEBI:29105"/>
        <label>2</label>
    </ligand>
</feature>
<feature type="binding site" evidence="1">
    <location>
        <position position="54"/>
    </location>
    <ligand>
        <name>Zn(2+)</name>
        <dbReference type="ChEBI" id="CHEBI:29105"/>
        <label>2</label>
    </ligand>
</feature>
<feature type="binding site" evidence="1">
    <location>
        <position position="57"/>
    </location>
    <ligand>
        <name>Zn(2+)</name>
        <dbReference type="ChEBI" id="CHEBI:29105"/>
        <label>1</label>
    </ligand>
</feature>
<feature type="binding site" evidence="1">
    <location>
        <position position="60"/>
    </location>
    <ligand>
        <name>Zn(2+)</name>
        <dbReference type="ChEBI" id="CHEBI:29105"/>
        <label>1</label>
    </ligand>
</feature>
<feature type="binding site" evidence="1">
    <location>
        <position position="72"/>
    </location>
    <ligand>
        <name>Zn(2+)</name>
        <dbReference type="ChEBI" id="CHEBI:29105"/>
        <label>2</label>
    </ligand>
</feature>
<feature type="binding site" evidence="1">
    <location>
        <position position="75"/>
    </location>
    <ligand>
        <name>Zn(2+)</name>
        <dbReference type="ChEBI" id="CHEBI:29105"/>
        <label>2</label>
    </ligand>
</feature>
<feature type="binding site" evidence="3">
    <location>
        <position position="100"/>
    </location>
    <ligand>
        <name>Zn(2+)</name>
        <dbReference type="ChEBI" id="CHEBI:29105"/>
        <label>3</label>
    </ligand>
</feature>
<feature type="binding site" evidence="3">
    <location>
        <position position="103"/>
    </location>
    <ligand>
        <name>Zn(2+)</name>
        <dbReference type="ChEBI" id="CHEBI:29105"/>
        <label>3</label>
    </ligand>
</feature>
<feature type="binding site" evidence="3">
    <location>
        <position position="115"/>
    </location>
    <ligand>
        <name>Zn(2+)</name>
        <dbReference type="ChEBI" id="CHEBI:29105"/>
        <label>3</label>
    </ligand>
</feature>
<feature type="binding site" evidence="3">
    <location>
        <position position="119"/>
    </location>
    <ligand>
        <name>Zn(2+)</name>
        <dbReference type="ChEBI" id="CHEBI:29105"/>
        <label>3</label>
    </ligand>
</feature>
<feature type="lipid moiety-binding region" description="N-myristoyl glycine" evidence="1">
    <location>
        <position position="2"/>
    </location>
</feature>
<comment type="function">
    <text evidence="1">E3 ubiquitin-protein ligase that mediates ubiquitination and subsequent proteasomal degradation of target proteins, such as RIGI, MAVS/IPS1, IFIH1/MDA5, JAK1 and p53/TP53. Acts as a negative regulator of type I interferon production by mediating ubiquitination of RIGI at 'Lys-181', leading to RIGI degradation. Mediates ubiquitination and subsequent degradation of p53/TP53. Mediates ubiquitination and subsequent degradation of JAK1. Acts as a positive regulator of T-cell activation.</text>
</comment>
<comment type="catalytic activity">
    <reaction evidence="1">
        <text>S-ubiquitinyl-[E2 ubiquitin-conjugating enzyme]-L-cysteine + [acceptor protein]-L-lysine = [E2 ubiquitin-conjugating enzyme]-L-cysteine + N(6)-ubiquitinyl-[acceptor protein]-L-lysine.</text>
        <dbReference type="EC" id="2.3.2.27"/>
    </reaction>
</comment>
<comment type="pathway">
    <text evidence="1">Protein modification; protein ubiquitination.</text>
</comment>
<comment type="subunit">
    <text evidence="1">Interacts with UBE2D1. Interacts with VCP/p97; leading to recruit RNF125 to RIGI and promote ubiquitination of RIGI.</text>
</comment>
<comment type="subcellular location">
    <subcellularLocation>
        <location evidence="1">Golgi apparatus membrane</location>
        <topology evidence="1">Lipid-anchor</topology>
    </subcellularLocation>
    <text evidence="1">Shows a reticular staining pattern within the cell and is probably expressed at other intracellular membranes in addition to the Golgi membrane. Not detected at the plasma membrane.</text>
</comment>
<comment type="domain">
    <text evidence="1">The C2HC RNF-type zinc finger and the linker region stabilize the RING-type zinc finger, leading to promote binding of the RING-type zinc finger to the ubiquitin-conjugating enzyme E2 (donor ubiquitin).</text>
</comment>
<comment type="PTM">
    <text evidence="1">Autoubiquitinated, leading to its subsequent proteasomal degradation.</text>
</comment>
<accession>Q95KF1</accession>
<organism>
    <name type="scientific">Macaca fascicularis</name>
    <name type="common">Crab-eating macaque</name>
    <name type="synonym">Cynomolgus monkey</name>
    <dbReference type="NCBI Taxonomy" id="9541"/>
    <lineage>
        <taxon>Eukaryota</taxon>
        <taxon>Metazoa</taxon>
        <taxon>Chordata</taxon>
        <taxon>Craniata</taxon>
        <taxon>Vertebrata</taxon>
        <taxon>Euteleostomi</taxon>
        <taxon>Mammalia</taxon>
        <taxon>Eutheria</taxon>
        <taxon>Euarchontoglires</taxon>
        <taxon>Primates</taxon>
        <taxon>Haplorrhini</taxon>
        <taxon>Catarrhini</taxon>
        <taxon>Cercopithecidae</taxon>
        <taxon>Cercopithecinae</taxon>
        <taxon>Macaca</taxon>
    </lineage>
</organism>
<dbReference type="EC" id="2.3.2.27" evidence="1"/>
<dbReference type="EMBL" id="AB060918">
    <property type="protein sequence ID" value="BAB46910.1"/>
    <property type="molecule type" value="mRNA"/>
</dbReference>
<dbReference type="RefSeq" id="NP_001272107.1">
    <property type="nucleotide sequence ID" value="NM_001285178.1"/>
</dbReference>
<dbReference type="SMR" id="Q95KF1"/>
<dbReference type="STRING" id="9541.ENSMFAP00000034097"/>
<dbReference type="eggNOG" id="ENOG502RYGV">
    <property type="taxonomic scope" value="Eukaryota"/>
</dbReference>
<dbReference type="UniPathway" id="UPA00143"/>
<dbReference type="Proteomes" id="UP000233100">
    <property type="component" value="Unplaced"/>
</dbReference>
<dbReference type="GO" id="GO:0000139">
    <property type="term" value="C:Golgi membrane"/>
    <property type="evidence" value="ECO:0000250"/>
    <property type="project" value="UniProtKB"/>
</dbReference>
<dbReference type="GO" id="GO:0043231">
    <property type="term" value="C:intracellular membrane-bounded organelle"/>
    <property type="evidence" value="ECO:0000250"/>
    <property type="project" value="UniProtKB"/>
</dbReference>
<dbReference type="GO" id="GO:0034098">
    <property type="term" value="C:VCP-NPL4-UFD1 AAA ATPase complex"/>
    <property type="evidence" value="ECO:0000250"/>
    <property type="project" value="UniProtKB"/>
</dbReference>
<dbReference type="GO" id="GO:0061630">
    <property type="term" value="F:ubiquitin protein ligase activity"/>
    <property type="evidence" value="ECO:0007669"/>
    <property type="project" value="TreeGrafter"/>
</dbReference>
<dbReference type="GO" id="GO:0008270">
    <property type="term" value="F:zinc ion binding"/>
    <property type="evidence" value="ECO:0007669"/>
    <property type="project" value="UniProtKB-KW"/>
</dbReference>
<dbReference type="GO" id="GO:0002250">
    <property type="term" value="P:adaptive immune response"/>
    <property type="evidence" value="ECO:0007669"/>
    <property type="project" value="UniProtKB-KW"/>
</dbReference>
<dbReference type="GO" id="GO:0039536">
    <property type="term" value="P:negative regulation of RIG-I signaling pathway"/>
    <property type="evidence" value="ECO:0000250"/>
    <property type="project" value="UniProtKB"/>
</dbReference>
<dbReference type="GO" id="GO:0032480">
    <property type="term" value="P:negative regulation of type I interferon production"/>
    <property type="evidence" value="ECO:0000250"/>
    <property type="project" value="UniProtKB"/>
</dbReference>
<dbReference type="GO" id="GO:0000209">
    <property type="term" value="P:protein polyubiquitination"/>
    <property type="evidence" value="ECO:0000250"/>
    <property type="project" value="UniProtKB"/>
</dbReference>
<dbReference type="GO" id="GO:0006511">
    <property type="term" value="P:ubiquitin-dependent protein catabolic process"/>
    <property type="evidence" value="ECO:0000250"/>
    <property type="project" value="UniProtKB"/>
</dbReference>
<dbReference type="CDD" id="cd16542">
    <property type="entry name" value="RING-HC_RNF125"/>
    <property type="match status" value="1"/>
</dbReference>
<dbReference type="FunFam" id="3.30.40.10:FF:000324">
    <property type="entry name" value="E3 ubiquitin-protein ligase RNF125 isoform X2"/>
    <property type="match status" value="1"/>
</dbReference>
<dbReference type="Gene3D" id="3.30.40.10">
    <property type="entry name" value="Zinc/RING finger domain, C3HC4 (zinc finger)"/>
    <property type="match status" value="1"/>
</dbReference>
<dbReference type="InterPro" id="IPR008598">
    <property type="entry name" value="Di19_Zn-bd"/>
</dbReference>
<dbReference type="InterPro" id="IPR051438">
    <property type="entry name" value="RNF_E3_ubiq-protein_ligase"/>
</dbReference>
<dbReference type="InterPro" id="IPR034734">
    <property type="entry name" value="ZF_C2HC_RNF"/>
</dbReference>
<dbReference type="InterPro" id="IPR001841">
    <property type="entry name" value="Znf_RING"/>
</dbReference>
<dbReference type="InterPro" id="IPR013083">
    <property type="entry name" value="Znf_RING/FYVE/PHD"/>
</dbReference>
<dbReference type="InterPro" id="IPR017907">
    <property type="entry name" value="Znf_RING_CS"/>
</dbReference>
<dbReference type="PANTHER" id="PTHR46016:SF2">
    <property type="entry name" value="E3 UBIQUITIN-PROTEIN LIGASE RNF125"/>
    <property type="match status" value="1"/>
</dbReference>
<dbReference type="PANTHER" id="PTHR46016">
    <property type="entry name" value="ZINC FINGER, RING/FYVE/PHD-TYPE"/>
    <property type="match status" value="1"/>
</dbReference>
<dbReference type="Pfam" id="PF13923">
    <property type="entry name" value="zf-C3HC4_2"/>
    <property type="match status" value="1"/>
</dbReference>
<dbReference type="Pfam" id="PF05605">
    <property type="entry name" value="zf-Di19"/>
    <property type="match status" value="1"/>
</dbReference>
<dbReference type="Pfam" id="PF18574">
    <property type="entry name" value="zf_C2HC_14"/>
    <property type="match status" value="1"/>
</dbReference>
<dbReference type="SMART" id="SM00184">
    <property type="entry name" value="RING"/>
    <property type="match status" value="1"/>
</dbReference>
<dbReference type="SUPFAM" id="SSF57850">
    <property type="entry name" value="RING/U-box"/>
    <property type="match status" value="1"/>
</dbReference>
<dbReference type="PROSITE" id="PS51803">
    <property type="entry name" value="ZF_C2HC_RNF"/>
    <property type="match status" value="1"/>
</dbReference>
<dbReference type="PROSITE" id="PS00518">
    <property type="entry name" value="ZF_RING_1"/>
    <property type="match status" value="1"/>
</dbReference>
<dbReference type="PROSITE" id="PS50089">
    <property type="entry name" value="ZF_RING_2"/>
    <property type="match status" value="1"/>
</dbReference>
<gene>
    <name type="primary">RNF125</name>
    <name type="ORF">QtrA-14722</name>
</gene>
<reference key="1">
    <citation type="submission" date="2001-04" db="EMBL/GenBank/DDBJ databases">
        <title>Isolation of full-length cDNA clones from macaque brain cDNA libraries.</title>
        <authorList>
            <person name="Osada N."/>
            <person name="Hida M."/>
            <person name="Kusuda J."/>
            <person name="Tanuma R."/>
            <person name="Iseki K."/>
            <person name="Hirai M."/>
            <person name="Terao K."/>
            <person name="Suzuki Y."/>
            <person name="Sugano S."/>
            <person name="Hashimoto K."/>
        </authorList>
    </citation>
    <scope>NUCLEOTIDE SEQUENCE [LARGE SCALE MRNA]</scope>
    <source>
        <tissue>Temporal cortex</tissue>
    </source>
</reference>
<protein>
    <recommendedName>
        <fullName>E3 ubiquitin-protein ligase RNF125</fullName>
        <ecNumber evidence="1">2.3.2.27</ecNumber>
    </recommendedName>
    <alternativeName>
        <fullName>RING finger protein 125</fullName>
    </alternativeName>
</protein>
<proteinExistence type="evidence at transcript level"/>
<name>RN125_MACFA</name>
<evidence type="ECO:0000250" key="1">
    <source>
        <dbReference type="UniProtKB" id="Q96EQ8"/>
    </source>
</evidence>
<evidence type="ECO:0000255" key="2">
    <source>
        <dbReference type="PROSITE-ProRule" id="PRU00175"/>
    </source>
</evidence>
<evidence type="ECO:0000255" key="3">
    <source>
        <dbReference type="PROSITE-ProRule" id="PRU01144"/>
    </source>
</evidence>
<evidence type="ECO:0000256" key="4">
    <source>
        <dbReference type="SAM" id="MobiDB-lite"/>
    </source>
</evidence>